<evidence type="ECO:0000250" key="1"/>
<evidence type="ECO:0000255" key="2"/>
<evidence type="ECO:0000255" key="3">
    <source>
        <dbReference type="PROSITE-ProRule" id="PRU00541"/>
    </source>
</evidence>
<evidence type="ECO:0000255" key="4">
    <source>
        <dbReference type="PROSITE-ProRule" id="PRU00542"/>
    </source>
</evidence>
<evidence type="ECO:0000256" key="5">
    <source>
        <dbReference type="SAM" id="MobiDB-lite"/>
    </source>
</evidence>
<evidence type="ECO:0000305" key="6"/>
<proteinExistence type="inferred from homology"/>
<dbReference type="EC" id="3.6.4.13"/>
<dbReference type="EMBL" id="AE017344">
    <property type="protein sequence ID" value="AAW43165.2"/>
    <property type="molecule type" value="Genomic_DNA"/>
</dbReference>
<dbReference type="RefSeq" id="XP_570472.1">
    <property type="nucleotide sequence ID" value="XM_570472.1"/>
</dbReference>
<dbReference type="SMR" id="P0CQ92"/>
<dbReference type="FunCoup" id="P0CQ92">
    <property type="interactions" value="443"/>
</dbReference>
<dbReference type="STRING" id="214684.P0CQ92"/>
<dbReference type="PaxDb" id="214684-P0CQ92"/>
<dbReference type="EnsemblFungi" id="AAW43165">
    <property type="protein sequence ID" value="AAW43165"/>
    <property type="gene ID" value="CND02650"/>
</dbReference>
<dbReference type="GeneID" id="3257049"/>
<dbReference type="KEGG" id="cne:CND02650"/>
<dbReference type="eggNOG" id="KOG0338">
    <property type="taxonomic scope" value="Eukaryota"/>
</dbReference>
<dbReference type="HOGENOM" id="CLU_003041_3_2_1"/>
<dbReference type="InParanoid" id="P0CQ92"/>
<dbReference type="OrthoDB" id="10259843at2759"/>
<dbReference type="Proteomes" id="UP000002149">
    <property type="component" value="Chromosome 4"/>
</dbReference>
<dbReference type="GO" id="GO:0005730">
    <property type="term" value="C:nucleolus"/>
    <property type="evidence" value="ECO:0000318"/>
    <property type="project" value="GO_Central"/>
</dbReference>
<dbReference type="GO" id="GO:0030687">
    <property type="term" value="C:preribosome, large subunit precursor"/>
    <property type="evidence" value="ECO:0007669"/>
    <property type="project" value="EnsemblFungi"/>
</dbReference>
<dbReference type="GO" id="GO:0005524">
    <property type="term" value="F:ATP binding"/>
    <property type="evidence" value="ECO:0007669"/>
    <property type="project" value="UniProtKB-KW"/>
</dbReference>
<dbReference type="GO" id="GO:0016887">
    <property type="term" value="F:ATP hydrolysis activity"/>
    <property type="evidence" value="ECO:0007669"/>
    <property type="project" value="RHEA"/>
</dbReference>
<dbReference type="GO" id="GO:0003723">
    <property type="term" value="F:RNA binding"/>
    <property type="evidence" value="ECO:0007669"/>
    <property type="project" value="UniProtKB-KW"/>
</dbReference>
<dbReference type="GO" id="GO:0003724">
    <property type="term" value="F:RNA helicase activity"/>
    <property type="evidence" value="ECO:0007669"/>
    <property type="project" value="UniProtKB-EC"/>
</dbReference>
<dbReference type="GO" id="GO:0000027">
    <property type="term" value="P:ribosomal large subunit assembly"/>
    <property type="evidence" value="ECO:0007669"/>
    <property type="project" value="EnsemblFungi"/>
</dbReference>
<dbReference type="GO" id="GO:0006364">
    <property type="term" value="P:rRNA processing"/>
    <property type="evidence" value="ECO:0007669"/>
    <property type="project" value="EnsemblFungi"/>
</dbReference>
<dbReference type="CDD" id="cd17947">
    <property type="entry name" value="DEADc_DDX27"/>
    <property type="match status" value="1"/>
</dbReference>
<dbReference type="CDD" id="cd18787">
    <property type="entry name" value="SF2_C_DEAD"/>
    <property type="match status" value="1"/>
</dbReference>
<dbReference type="Gene3D" id="3.40.50.300">
    <property type="entry name" value="P-loop containing nucleotide triphosphate hydrolases"/>
    <property type="match status" value="2"/>
</dbReference>
<dbReference type="InterPro" id="IPR011545">
    <property type="entry name" value="DEAD/DEAH_box_helicase_dom"/>
</dbReference>
<dbReference type="InterPro" id="IPR050079">
    <property type="entry name" value="DEAD_box_RNA_helicase"/>
</dbReference>
<dbReference type="InterPro" id="IPR014001">
    <property type="entry name" value="Helicase_ATP-bd"/>
</dbReference>
<dbReference type="InterPro" id="IPR001650">
    <property type="entry name" value="Helicase_C-like"/>
</dbReference>
<dbReference type="InterPro" id="IPR027417">
    <property type="entry name" value="P-loop_NTPase"/>
</dbReference>
<dbReference type="InterPro" id="IPR000629">
    <property type="entry name" value="RNA-helicase_DEAD-box_CS"/>
</dbReference>
<dbReference type="InterPro" id="IPR014014">
    <property type="entry name" value="RNA_helicase_DEAD_Q_motif"/>
</dbReference>
<dbReference type="PANTHER" id="PTHR47959:SF1">
    <property type="entry name" value="ATP-DEPENDENT RNA HELICASE DBPA"/>
    <property type="match status" value="1"/>
</dbReference>
<dbReference type="PANTHER" id="PTHR47959">
    <property type="entry name" value="ATP-DEPENDENT RNA HELICASE RHLE-RELATED"/>
    <property type="match status" value="1"/>
</dbReference>
<dbReference type="Pfam" id="PF00270">
    <property type="entry name" value="DEAD"/>
    <property type="match status" value="1"/>
</dbReference>
<dbReference type="Pfam" id="PF00271">
    <property type="entry name" value="Helicase_C"/>
    <property type="match status" value="1"/>
</dbReference>
<dbReference type="SMART" id="SM00487">
    <property type="entry name" value="DEXDc"/>
    <property type="match status" value="1"/>
</dbReference>
<dbReference type="SMART" id="SM00490">
    <property type="entry name" value="HELICc"/>
    <property type="match status" value="1"/>
</dbReference>
<dbReference type="SUPFAM" id="SSF52540">
    <property type="entry name" value="P-loop containing nucleoside triphosphate hydrolases"/>
    <property type="match status" value="1"/>
</dbReference>
<dbReference type="PROSITE" id="PS00039">
    <property type="entry name" value="DEAD_ATP_HELICASE"/>
    <property type="match status" value="1"/>
</dbReference>
<dbReference type="PROSITE" id="PS51192">
    <property type="entry name" value="HELICASE_ATP_BIND_1"/>
    <property type="match status" value="1"/>
</dbReference>
<dbReference type="PROSITE" id="PS51194">
    <property type="entry name" value="HELICASE_CTER"/>
    <property type="match status" value="1"/>
</dbReference>
<dbReference type="PROSITE" id="PS51195">
    <property type="entry name" value="Q_MOTIF"/>
    <property type="match status" value="1"/>
</dbReference>
<accession>P0CQ92</accession>
<accession>Q55TT3</accession>
<accession>Q5KIK3</accession>
<feature type="chain" id="PRO_0000232244" description="ATP-dependent RNA helicase DRS1">
    <location>
        <begin position="1"/>
        <end position="793"/>
    </location>
</feature>
<feature type="domain" description="Helicase ATP-binding" evidence="3">
    <location>
        <begin position="238"/>
        <end position="416"/>
    </location>
</feature>
<feature type="domain" description="Helicase C-terminal" evidence="4">
    <location>
        <begin position="427"/>
        <end position="606"/>
    </location>
</feature>
<feature type="region of interest" description="Disordered" evidence="5">
    <location>
        <begin position="1"/>
        <end position="208"/>
    </location>
</feature>
<feature type="region of interest" description="Disordered" evidence="5">
    <location>
        <begin position="645"/>
        <end position="793"/>
    </location>
</feature>
<feature type="coiled-coil region" evidence="2">
    <location>
        <begin position="560"/>
        <end position="630"/>
    </location>
</feature>
<feature type="short sequence motif" description="Q motif">
    <location>
        <begin position="207"/>
        <end position="235"/>
    </location>
</feature>
<feature type="short sequence motif" description="DEAD box">
    <location>
        <begin position="364"/>
        <end position="367"/>
    </location>
</feature>
<feature type="compositionally biased region" description="Basic residues" evidence="5">
    <location>
        <begin position="75"/>
        <end position="89"/>
    </location>
</feature>
<feature type="compositionally biased region" description="Acidic residues" evidence="5">
    <location>
        <begin position="94"/>
        <end position="114"/>
    </location>
</feature>
<feature type="compositionally biased region" description="Acidic residues" evidence="5">
    <location>
        <begin position="122"/>
        <end position="144"/>
    </location>
</feature>
<feature type="compositionally biased region" description="Acidic residues" evidence="5">
    <location>
        <begin position="152"/>
        <end position="184"/>
    </location>
</feature>
<feature type="compositionally biased region" description="Low complexity" evidence="5">
    <location>
        <begin position="193"/>
        <end position="208"/>
    </location>
</feature>
<feature type="compositionally biased region" description="Basic and acidic residues" evidence="5">
    <location>
        <begin position="671"/>
        <end position="688"/>
    </location>
</feature>
<feature type="compositionally biased region" description="Basic and acidic residues" evidence="5">
    <location>
        <begin position="726"/>
        <end position="740"/>
    </location>
</feature>
<feature type="compositionally biased region" description="Basic residues" evidence="5">
    <location>
        <begin position="741"/>
        <end position="752"/>
    </location>
</feature>
<feature type="compositionally biased region" description="Basic and acidic residues" evidence="5">
    <location>
        <begin position="761"/>
        <end position="771"/>
    </location>
</feature>
<feature type="compositionally biased region" description="Basic residues" evidence="5">
    <location>
        <begin position="782"/>
        <end position="793"/>
    </location>
</feature>
<feature type="binding site" evidence="3">
    <location>
        <begin position="251"/>
        <end position="258"/>
    </location>
    <ligand>
        <name>ATP</name>
        <dbReference type="ChEBI" id="CHEBI:30616"/>
    </ligand>
</feature>
<name>DRS1_CRYNJ</name>
<gene>
    <name type="primary">DRS1</name>
    <name type="ordered locus">CND02650</name>
</gene>
<protein>
    <recommendedName>
        <fullName>ATP-dependent RNA helicase DRS1</fullName>
        <ecNumber>3.6.4.13</ecNumber>
    </recommendedName>
</protein>
<reference key="1">
    <citation type="journal article" date="2005" name="Science">
        <title>The genome of the basidiomycetous yeast and human pathogen Cryptococcus neoformans.</title>
        <authorList>
            <person name="Loftus B.J."/>
            <person name="Fung E."/>
            <person name="Roncaglia P."/>
            <person name="Rowley D."/>
            <person name="Amedeo P."/>
            <person name="Bruno D."/>
            <person name="Vamathevan J."/>
            <person name="Miranda M."/>
            <person name="Anderson I.J."/>
            <person name="Fraser J.A."/>
            <person name="Allen J.E."/>
            <person name="Bosdet I.E."/>
            <person name="Brent M.R."/>
            <person name="Chiu R."/>
            <person name="Doering T.L."/>
            <person name="Donlin M.J."/>
            <person name="D'Souza C.A."/>
            <person name="Fox D.S."/>
            <person name="Grinberg V."/>
            <person name="Fu J."/>
            <person name="Fukushima M."/>
            <person name="Haas B.J."/>
            <person name="Huang J.C."/>
            <person name="Janbon G."/>
            <person name="Jones S.J.M."/>
            <person name="Koo H.L."/>
            <person name="Krzywinski M.I."/>
            <person name="Kwon-Chung K.J."/>
            <person name="Lengeler K.B."/>
            <person name="Maiti R."/>
            <person name="Marra M.A."/>
            <person name="Marra R.E."/>
            <person name="Mathewson C.A."/>
            <person name="Mitchell T.G."/>
            <person name="Pertea M."/>
            <person name="Riggs F.R."/>
            <person name="Salzberg S.L."/>
            <person name="Schein J.E."/>
            <person name="Shvartsbeyn A."/>
            <person name="Shin H."/>
            <person name="Shumway M."/>
            <person name="Specht C.A."/>
            <person name="Suh B.B."/>
            <person name="Tenney A."/>
            <person name="Utterback T.R."/>
            <person name="Wickes B.L."/>
            <person name="Wortman J.R."/>
            <person name="Wye N.H."/>
            <person name="Kronstad J.W."/>
            <person name="Lodge J.K."/>
            <person name="Heitman J."/>
            <person name="Davis R.W."/>
            <person name="Fraser C.M."/>
            <person name="Hyman R.W."/>
        </authorList>
    </citation>
    <scope>NUCLEOTIDE SEQUENCE [LARGE SCALE GENOMIC DNA]</scope>
    <source>
        <strain>JEC21 / ATCC MYA-565</strain>
    </source>
</reference>
<organism>
    <name type="scientific">Cryptococcus neoformans var. neoformans serotype D (strain JEC21 / ATCC MYA-565)</name>
    <name type="common">Filobasidiella neoformans</name>
    <dbReference type="NCBI Taxonomy" id="214684"/>
    <lineage>
        <taxon>Eukaryota</taxon>
        <taxon>Fungi</taxon>
        <taxon>Dikarya</taxon>
        <taxon>Basidiomycota</taxon>
        <taxon>Agaricomycotina</taxon>
        <taxon>Tremellomycetes</taxon>
        <taxon>Tremellales</taxon>
        <taxon>Cryptococcaceae</taxon>
        <taxon>Cryptococcus</taxon>
        <taxon>Cryptococcus neoformans species complex</taxon>
    </lineage>
</organism>
<keyword id="KW-0067">ATP-binding</keyword>
<keyword id="KW-0175">Coiled coil</keyword>
<keyword id="KW-0347">Helicase</keyword>
<keyword id="KW-0378">Hydrolase</keyword>
<keyword id="KW-0547">Nucleotide-binding</keyword>
<keyword id="KW-0539">Nucleus</keyword>
<keyword id="KW-1185">Reference proteome</keyword>
<keyword id="KW-0690">Ribosome biogenesis</keyword>
<keyword id="KW-0694">RNA-binding</keyword>
<comment type="function">
    <text evidence="1">ATP-binding RNA helicase involved in ribosome assembly.</text>
</comment>
<comment type="catalytic activity">
    <reaction>
        <text>ATP + H2O = ADP + phosphate + H(+)</text>
        <dbReference type="Rhea" id="RHEA:13065"/>
        <dbReference type="ChEBI" id="CHEBI:15377"/>
        <dbReference type="ChEBI" id="CHEBI:15378"/>
        <dbReference type="ChEBI" id="CHEBI:30616"/>
        <dbReference type="ChEBI" id="CHEBI:43474"/>
        <dbReference type="ChEBI" id="CHEBI:456216"/>
        <dbReference type="EC" id="3.6.4.13"/>
    </reaction>
</comment>
<comment type="subunit">
    <text evidence="1">Associates with pre-ribosomal particles.</text>
</comment>
<comment type="subcellular location">
    <subcellularLocation>
        <location evidence="1">Nucleus</location>
        <location evidence="1">Nucleolus</location>
    </subcellularLocation>
</comment>
<comment type="domain">
    <text>The Q motif is unique to and characteristic of the DEAD box family of RNA helicases and controls ATP binding and hydrolysis.</text>
</comment>
<comment type="similarity">
    <text evidence="6">Belongs to the DEAD box helicase family. DDX27/DRS1 subfamily.</text>
</comment>
<sequence>MADDFITTIDSDDEVSNYGEPSALPKIKDDELDPDFQFDLGGGRSEGLDLWGGDEVQGVKKGNEPINVDDIIERKRGKPIRAFKDRKRKRDEDATSEDDLEEDEEEEGDSNDDSDAAKSGDSEEDEMDVDMSEGDGDEEDENEIESLKREDESDEEEEEEEDDYDEEGENEVVDSDSESEEETAAEIARKDAFFSSDPTTTDPTLPSSFTAMNLSRPLLRALTSLQFTAPTPIQARAIPLALLGRDILGSAVTGSGKTAAFMVPILERLCYRDRGKGGAACRVLVLCPTRELAVQCEAVGKALAEKGGLDVRFALLVGGLSLNAQAHTLRTLPDILIATPGRLIDHLTNTPSFTLSALDVLVIDEADRMLEAGFTDELEEIIKACPRSRQTMLFSATMTDSVDELVKLSLDKPIRVFVDPKRNTARGLTQEFVRIRSDDSRSPSLLALCKRTIREKCIIFFRSKALAHQMRIVFGLFGLKAAELHGNLTQEQRLQALNDFKAGTVDYLLATDLASRGLDIKGVETVINYDMPGQLAQYTHRVGRTARAGRKGRSVSLVGEADRKMLKAAIKQAEADQVRHRIIPSEAVTAMKEKLEEFKDDIQEILKEEKEEKLLRQADMEIKKGQNMVEHEAEIFSRPARTWFQSGKEKQASKSAGKDAYVGSFPSTGKSAEKEKEKLKRGKYDGLSRRLKRRKMAIEEDAADAAAARKTEMGIRAAKKNALPKKITEPQPRLEKAGKGKDKKKGKARRVTGGKGSAFDSEGKKSHEGMRAKPAKVNLEKGKKKGGKGKGRK</sequence>